<evidence type="ECO:0000255" key="1">
    <source>
        <dbReference type="HAMAP-Rule" id="MF_01218"/>
    </source>
</evidence>
<feature type="chain" id="PRO_0000120839" description="Uracil phosphoribosyltransferase">
    <location>
        <begin position="1"/>
        <end position="209"/>
    </location>
</feature>
<feature type="binding site" evidence="1">
    <location>
        <position position="79"/>
    </location>
    <ligand>
        <name>5-phospho-alpha-D-ribose 1-diphosphate</name>
        <dbReference type="ChEBI" id="CHEBI:58017"/>
    </ligand>
</feature>
<feature type="binding site" evidence="1">
    <location>
        <position position="104"/>
    </location>
    <ligand>
        <name>5-phospho-alpha-D-ribose 1-diphosphate</name>
        <dbReference type="ChEBI" id="CHEBI:58017"/>
    </ligand>
</feature>
<feature type="binding site" evidence="1">
    <location>
        <begin position="131"/>
        <end position="139"/>
    </location>
    <ligand>
        <name>5-phospho-alpha-D-ribose 1-diphosphate</name>
        <dbReference type="ChEBI" id="CHEBI:58017"/>
    </ligand>
</feature>
<feature type="binding site" evidence="1">
    <location>
        <position position="194"/>
    </location>
    <ligand>
        <name>uracil</name>
        <dbReference type="ChEBI" id="CHEBI:17568"/>
    </ligand>
</feature>
<feature type="binding site" evidence="1">
    <location>
        <begin position="199"/>
        <end position="201"/>
    </location>
    <ligand>
        <name>uracil</name>
        <dbReference type="ChEBI" id="CHEBI:17568"/>
    </ligand>
</feature>
<feature type="binding site" evidence="1">
    <location>
        <position position="200"/>
    </location>
    <ligand>
        <name>5-phospho-alpha-D-ribose 1-diphosphate</name>
        <dbReference type="ChEBI" id="CHEBI:58017"/>
    </ligand>
</feature>
<comment type="function">
    <text evidence="1">Catalyzes the conversion of uracil and 5-phospho-alpha-D-ribose 1-diphosphate (PRPP) to UMP and diphosphate.</text>
</comment>
<comment type="catalytic activity">
    <reaction evidence="1">
        <text>UMP + diphosphate = 5-phospho-alpha-D-ribose 1-diphosphate + uracil</text>
        <dbReference type="Rhea" id="RHEA:13017"/>
        <dbReference type="ChEBI" id="CHEBI:17568"/>
        <dbReference type="ChEBI" id="CHEBI:33019"/>
        <dbReference type="ChEBI" id="CHEBI:57865"/>
        <dbReference type="ChEBI" id="CHEBI:58017"/>
        <dbReference type="EC" id="2.4.2.9"/>
    </reaction>
</comment>
<comment type="cofactor">
    <cofactor evidence="1">
        <name>Mg(2+)</name>
        <dbReference type="ChEBI" id="CHEBI:18420"/>
    </cofactor>
    <text evidence="1">Binds 1 Mg(2+) ion per subunit. The magnesium is bound as Mg-PRPP.</text>
</comment>
<comment type="activity regulation">
    <text evidence="1">Allosterically activated by GTP.</text>
</comment>
<comment type="pathway">
    <text evidence="1">Pyrimidine metabolism; UMP biosynthesis via salvage pathway; UMP from uracil: step 1/1.</text>
</comment>
<comment type="similarity">
    <text evidence="1">Belongs to the UPRTase family.</text>
</comment>
<reference key="1">
    <citation type="journal article" date="2002" name="Microbiology">
        <title>Physical and genetic map of the Lactobacillus sakei 23K chromosome.</title>
        <authorList>
            <person name="Dudez A.-M."/>
            <person name="Chaillou S."/>
            <person name="Hissler L."/>
            <person name="Stentz R."/>
            <person name="Champomier-Verges M.-C."/>
            <person name="Alpert C.-A."/>
            <person name="Zagorec M."/>
        </authorList>
    </citation>
    <scope>NUCLEOTIDE SEQUENCE [GENOMIC DNA]</scope>
</reference>
<dbReference type="EC" id="2.4.2.9" evidence="1"/>
<dbReference type="EMBL" id="AF401665">
    <property type="protein sequence ID" value="AAL00948.1"/>
    <property type="molecule type" value="Genomic_DNA"/>
</dbReference>
<dbReference type="RefSeq" id="WP_011374832.1">
    <property type="nucleotide sequence ID" value="NZ_VSTE01000001.1"/>
</dbReference>
<dbReference type="SMR" id="Q93CX7"/>
<dbReference type="GeneID" id="57133990"/>
<dbReference type="OMA" id="KHKIGLM"/>
<dbReference type="UniPathway" id="UPA00574">
    <property type="reaction ID" value="UER00636"/>
</dbReference>
<dbReference type="GO" id="GO:0005525">
    <property type="term" value="F:GTP binding"/>
    <property type="evidence" value="ECO:0007669"/>
    <property type="project" value="UniProtKB-KW"/>
</dbReference>
<dbReference type="GO" id="GO:0000287">
    <property type="term" value="F:magnesium ion binding"/>
    <property type="evidence" value="ECO:0007669"/>
    <property type="project" value="UniProtKB-UniRule"/>
</dbReference>
<dbReference type="GO" id="GO:0004845">
    <property type="term" value="F:uracil phosphoribosyltransferase activity"/>
    <property type="evidence" value="ECO:0007669"/>
    <property type="project" value="UniProtKB-UniRule"/>
</dbReference>
<dbReference type="GO" id="GO:0044206">
    <property type="term" value="P:UMP salvage"/>
    <property type="evidence" value="ECO:0007669"/>
    <property type="project" value="UniProtKB-UniRule"/>
</dbReference>
<dbReference type="GO" id="GO:0006223">
    <property type="term" value="P:uracil salvage"/>
    <property type="evidence" value="ECO:0007669"/>
    <property type="project" value="InterPro"/>
</dbReference>
<dbReference type="CDD" id="cd06223">
    <property type="entry name" value="PRTases_typeI"/>
    <property type="match status" value="1"/>
</dbReference>
<dbReference type="FunFam" id="3.40.50.2020:FF:000003">
    <property type="entry name" value="Uracil phosphoribosyltransferase"/>
    <property type="match status" value="1"/>
</dbReference>
<dbReference type="Gene3D" id="3.40.50.2020">
    <property type="match status" value="1"/>
</dbReference>
<dbReference type="HAMAP" id="MF_01218_B">
    <property type="entry name" value="Upp_B"/>
    <property type="match status" value="1"/>
</dbReference>
<dbReference type="InterPro" id="IPR000836">
    <property type="entry name" value="PRibTrfase_dom"/>
</dbReference>
<dbReference type="InterPro" id="IPR029057">
    <property type="entry name" value="PRTase-like"/>
</dbReference>
<dbReference type="InterPro" id="IPR034332">
    <property type="entry name" value="Upp_B"/>
</dbReference>
<dbReference type="InterPro" id="IPR050054">
    <property type="entry name" value="UPRTase/APRTase"/>
</dbReference>
<dbReference type="InterPro" id="IPR005765">
    <property type="entry name" value="Ura_phspho_trans"/>
</dbReference>
<dbReference type="NCBIfam" id="NF001097">
    <property type="entry name" value="PRK00129.1"/>
    <property type="match status" value="1"/>
</dbReference>
<dbReference type="NCBIfam" id="TIGR01091">
    <property type="entry name" value="upp"/>
    <property type="match status" value="1"/>
</dbReference>
<dbReference type="PANTHER" id="PTHR32315">
    <property type="entry name" value="ADENINE PHOSPHORIBOSYLTRANSFERASE"/>
    <property type="match status" value="1"/>
</dbReference>
<dbReference type="PANTHER" id="PTHR32315:SF4">
    <property type="entry name" value="URACIL PHOSPHORIBOSYLTRANSFERASE, CHLOROPLASTIC"/>
    <property type="match status" value="1"/>
</dbReference>
<dbReference type="Pfam" id="PF14681">
    <property type="entry name" value="UPRTase"/>
    <property type="match status" value="1"/>
</dbReference>
<dbReference type="SUPFAM" id="SSF53271">
    <property type="entry name" value="PRTase-like"/>
    <property type="match status" value="1"/>
</dbReference>
<name>UPP_LATSK</name>
<proteinExistence type="inferred from homology"/>
<protein>
    <recommendedName>
        <fullName evidence="1">Uracil phosphoribosyltransferase</fullName>
        <ecNumber evidence="1">2.4.2.9</ecNumber>
    </recommendedName>
    <alternativeName>
        <fullName evidence="1">UMP pyrophosphorylase</fullName>
    </alternativeName>
    <alternativeName>
        <fullName evidence="1">UPRTase</fullName>
    </alternativeName>
</protein>
<accession>Q93CX7</accession>
<organism>
    <name type="scientific">Latilactobacillus sakei</name>
    <name type="common">Lactobacillus sakei</name>
    <dbReference type="NCBI Taxonomy" id="1599"/>
    <lineage>
        <taxon>Bacteria</taxon>
        <taxon>Bacillati</taxon>
        <taxon>Bacillota</taxon>
        <taxon>Bacilli</taxon>
        <taxon>Lactobacillales</taxon>
        <taxon>Lactobacillaceae</taxon>
        <taxon>Latilactobacillus</taxon>
    </lineage>
</organism>
<keyword id="KW-0021">Allosteric enzyme</keyword>
<keyword id="KW-0328">Glycosyltransferase</keyword>
<keyword id="KW-0342">GTP-binding</keyword>
<keyword id="KW-0460">Magnesium</keyword>
<keyword id="KW-0547">Nucleotide-binding</keyword>
<keyword id="KW-0808">Transferase</keyword>
<sequence>MAKFTVLNHPLIQHKLTIIRNKNTGTKVFREVANEIAELMVYEITRDLAMEDVEVETPMGPAIEKQLSGKKLAVVPILRAGLGMVDGVLELIPAAKVGHIGMYRDEKTLQPHEYFVKLPTDIDQRQLFIVDPMLATGGSAIMAIDALKKRGATSMRLVVLVAAPEGVKAVQEAHPDVDIYAAGLDDGLNEEGYIYPGLGDAGDRLFGTK</sequence>
<gene>
    <name evidence="1" type="primary">upp</name>
</gene>